<reference key="1">
    <citation type="submission" date="2001-08" db="EMBL/GenBank/DDBJ databases">
        <title>Potential metastasis suppressor gene(s) in chromosome 11 hybrid of MDA MB 435 breast carcinoma cell line.</title>
        <authorList>
            <person name="Samant R.S."/>
            <person name="Seraj J."/>
            <person name="Sakamaki T."/>
            <person name="Verderame M.F."/>
            <person name="Welch D.R."/>
        </authorList>
    </citation>
    <scope>NUCLEOTIDE SEQUENCE [MRNA]</scope>
</reference>
<reference key="2">
    <citation type="journal article" date="2001" name="Genome Res.">
        <title>Towards a catalog of human genes and proteins: sequencing and analysis of 500 novel complete protein coding human cDNAs.</title>
        <authorList>
            <person name="Wiemann S."/>
            <person name="Weil B."/>
            <person name="Wellenreuther R."/>
            <person name="Gassenhuber J."/>
            <person name="Glassl S."/>
            <person name="Ansorge W."/>
            <person name="Boecher M."/>
            <person name="Bloecker H."/>
            <person name="Bauersachs S."/>
            <person name="Blum H."/>
            <person name="Lauber J."/>
            <person name="Duesterhoeft A."/>
            <person name="Beyer A."/>
            <person name="Koehrer K."/>
            <person name="Strack N."/>
            <person name="Mewes H.-W."/>
            <person name="Ottenwaelder B."/>
            <person name="Obermaier B."/>
            <person name="Tampe J."/>
            <person name="Heubner D."/>
            <person name="Wambutt R."/>
            <person name="Korn B."/>
            <person name="Klein M."/>
            <person name="Poustka A."/>
        </authorList>
    </citation>
    <scope>NUCLEOTIDE SEQUENCE [LARGE SCALE MRNA]</scope>
    <source>
        <tissue>Uterus</tissue>
    </source>
</reference>
<reference key="3">
    <citation type="journal article" date="2004" name="Nat. Genet.">
        <title>Complete sequencing and characterization of 21,243 full-length human cDNAs.</title>
        <authorList>
            <person name="Ota T."/>
            <person name="Suzuki Y."/>
            <person name="Nishikawa T."/>
            <person name="Otsuki T."/>
            <person name="Sugiyama T."/>
            <person name="Irie R."/>
            <person name="Wakamatsu A."/>
            <person name="Hayashi K."/>
            <person name="Sato H."/>
            <person name="Nagai K."/>
            <person name="Kimura K."/>
            <person name="Makita H."/>
            <person name="Sekine M."/>
            <person name="Obayashi M."/>
            <person name="Nishi T."/>
            <person name="Shibahara T."/>
            <person name="Tanaka T."/>
            <person name="Ishii S."/>
            <person name="Yamamoto J."/>
            <person name="Saito K."/>
            <person name="Kawai Y."/>
            <person name="Isono Y."/>
            <person name="Nakamura Y."/>
            <person name="Nagahari K."/>
            <person name="Murakami K."/>
            <person name="Yasuda T."/>
            <person name="Iwayanagi T."/>
            <person name="Wagatsuma M."/>
            <person name="Shiratori A."/>
            <person name="Sudo H."/>
            <person name="Hosoiri T."/>
            <person name="Kaku Y."/>
            <person name="Kodaira H."/>
            <person name="Kondo H."/>
            <person name="Sugawara M."/>
            <person name="Takahashi M."/>
            <person name="Kanda K."/>
            <person name="Yokoi T."/>
            <person name="Furuya T."/>
            <person name="Kikkawa E."/>
            <person name="Omura Y."/>
            <person name="Abe K."/>
            <person name="Kamihara K."/>
            <person name="Katsuta N."/>
            <person name="Sato K."/>
            <person name="Tanikawa M."/>
            <person name="Yamazaki M."/>
            <person name="Ninomiya K."/>
            <person name="Ishibashi T."/>
            <person name="Yamashita H."/>
            <person name="Murakawa K."/>
            <person name="Fujimori K."/>
            <person name="Tanai H."/>
            <person name="Kimata M."/>
            <person name="Watanabe M."/>
            <person name="Hiraoka S."/>
            <person name="Chiba Y."/>
            <person name="Ishida S."/>
            <person name="Ono Y."/>
            <person name="Takiguchi S."/>
            <person name="Watanabe S."/>
            <person name="Yosida M."/>
            <person name="Hotuta T."/>
            <person name="Kusano J."/>
            <person name="Kanehori K."/>
            <person name="Takahashi-Fujii A."/>
            <person name="Hara H."/>
            <person name="Tanase T.-O."/>
            <person name="Nomura Y."/>
            <person name="Togiya S."/>
            <person name="Komai F."/>
            <person name="Hara R."/>
            <person name="Takeuchi K."/>
            <person name="Arita M."/>
            <person name="Imose N."/>
            <person name="Musashino K."/>
            <person name="Yuuki H."/>
            <person name="Oshima A."/>
            <person name="Sasaki N."/>
            <person name="Aotsuka S."/>
            <person name="Yoshikawa Y."/>
            <person name="Matsunawa H."/>
            <person name="Ichihara T."/>
            <person name="Shiohata N."/>
            <person name="Sano S."/>
            <person name="Moriya S."/>
            <person name="Momiyama H."/>
            <person name="Satoh N."/>
            <person name="Takami S."/>
            <person name="Terashima Y."/>
            <person name="Suzuki O."/>
            <person name="Nakagawa S."/>
            <person name="Senoh A."/>
            <person name="Mizoguchi H."/>
            <person name="Goto Y."/>
            <person name="Shimizu F."/>
            <person name="Wakebe H."/>
            <person name="Hishigaki H."/>
            <person name="Watanabe T."/>
            <person name="Sugiyama A."/>
            <person name="Takemoto M."/>
            <person name="Kawakami B."/>
            <person name="Yamazaki M."/>
            <person name="Watanabe K."/>
            <person name="Kumagai A."/>
            <person name="Itakura S."/>
            <person name="Fukuzumi Y."/>
            <person name="Fujimori Y."/>
            <person name="Komiyama M."/>
            <person name="Tashiro H."/>
            <person name="Tanigami A."/>
            <person name="Fujiwara T."/>
            <person name="Ono T."/>
            <person name="Yamada K."/>
            <person name="Fujii Y."/>
            <person name="Ozaki K."/>
            <person name="Hirao M."/>
            <person name="Ohmori Y."/>
            <person name="Kawabata A."/>
            <person name="Hikiji T."/>
            <person name="Kobatake N."/>
            <person name="Inagaki H."/>
            <person name="Ikema Y."/>
            <person name="Okamoto S."/>
            <person name="Okitani R."/>
            <person name="Kawakami T."/>
            <person name="Noguchi S."/>
            <person name="Itoh T."/>
            <person name="Shigeta K."/>
            <person name="Senba T."/>
            <person name="Matsumura K."/>
            <person name="Nakajima Y."/>
            <person name="Mizuno T."/>
            <person name="Morinaga M."/>
            <person name="Sasaki M."/>
            <person name="Togashi T."/>
            <person name="Oyama M."/>
            <person name="Hata H."/>
            <person name="Watanabe M."/>
            <person name="Komatsu T."/>
            <person name="Mizushima-Sugano J."/>
            <person name="Satoh T."/>
            <person name="Shirai Y."/>
            <person name="Takahashi Y."/>
            <person name="Nakagawa K."/>
            <person name="Okumura K."/>
            <person name="Nagase T."/>
            <person name="Nomura N."/>
            <person name="Kikuchi H."/>
            <person name="Masuho Y."/>
            <person name="Yamashita R."/>
            <person name="Nakai K."/>
            <person name="Yada T."/>
            <person name="Nakamura Y."/>
            <person name="Ohara O."/>
            <person name="Isogai T."/>
            <person name="Sugano S."/>
        </authorList>
    </citation>
    <scope>NUCLEOTIDE SEQUENCE [LARGE SCALE MRNA]</scope>
    <source>
        <tissue>Placenta</tissue>
        <tissue>Testis</tissue>
    </source>
</reference>
<reference key="4">
    <citation type="submission" date="2005-04" db="EMBL/GenBank/DDBJ databases">
        <authorList>
            <person name="Suzuki Y."/>
            <person name="Sugano S."/>
            <person name="Totoki Y."/>
            <person name="Toyoda A."/>
            <person name="Takeda T."/>
            <person name="Sakaki Y."/>
            <person name="Tanaka A."/>
            <person name="Yokoyama S."/>
        </authorList>
    </citation>
    <scope>NUCLEOTIDE SEQUENCE [LARGE SCALE MRNA]</scope>
</reference>
<reference key="5">
    <citation type="submission" date="2005-09" db="EMBL/GenBank/DDBJ databases">
        <authorList>
            <person name="Mural R.J."/>
            <person name="Istrail S."/>
            <person name="Sutton G.G."/>
            <person name="Florea L."/>
            <person name="Halpern A.L."/>
            <person name="Mobarry C.M."/>
            <person name="Lippert R."/>
            <person name="Walenz B."/>
            <person name="Shatkay H."/>
            <person name="Dew I."/>
            <person name="Miller J.R."/>
            <person name="Flanigan M.J."/>
            <person name="Edwards N.J."/>
            <person name="Bolanos R."/>
            <person name="Fasulo D."/>
            <person name="Halldorsson B.V."/>
            <person name="Hannenhalli S."/>
            <person name="Turner R."/>
            <person name="Yooseph S."/>
            <person name="Lu F."/>
            <person name="Nusskern D.R."/>
            <person name="Shue B.C."/>
            <person name="Zheng X.H."/>
            <person name="Zhong F."/>
            <person name="Delcher A.L."/>
            <person name="Huson D.H."/>
            <person name="Kravitz S.A."/>
            <person name="Mouchard L."/>
            <person name="Reinert K."/>
            <person name="Remington K.A."/>
            <person name="Clark A.G."/>
            <person name="Waterman M.S."/>
            <person name="Eichler E.E."/>
            <person name="Adams M.D."/>
            <person name="Hunkapiller M.W."/>
            <person name="Myers E.W."/>
            <person name="Venter J.C."/>
        </authorList>
    </citation>
    <scope>NUCLEOTIDE SEQUENCE [LARGE SCALE GENOMIC DNA]</scope>
</reference>
<reference key="6">
    <citation type="journal article" date="2004" name="Genome Res.">
        <title>The status, quality, and expansion of the NIH full-length cDNA project: the Mammalian Gene Collection (MGC).</title>
        <authorList>
            <consortium name="The MGC Project Team"/>
        </authorList>
    </citation>
    <scope>NUCLEOTIDE SEQUENCE [LARGE SCALE MRNA]</scope>
    <source>
        <tissue>Eye</tissue>
        <tissue>Placenta</tissue>
    </source>
</reference>
<reference key="7">
    <citation type="journal article" date="2003" name="Nucleic Acids Res.">
        <title>The human Imp3 and Imp4 proteins form a ternary complex with hMpp10, which only interacts with the U3 snoRNA in 60-80S ribonucleoprotein complexes.</title>
        <authorList>
            <person name="Granneman S."/>
            <person name="Gallagher J.E.G."/>
            <person name="Vogelzangs J."/>
            <person name="Horstman W."/>
            <person name="van Venrooij W.J."/>
            <person name="Baserga S.J."/>
            <person name="Pruijn G.J.M."/>
        </authorList>
    </citation>
    <scope>FUNCTION</scope>
    <scope>SUBCELLULAR LOCATION</scope>
    <scope>INTERACTION WITH MPHOSPH10</scope>
</reference>
<reference key="8">
    <citation type="journal article" date="2011" name="BMC Syst. Biol.">
        <title>Initial characterization of the human central proteome.</title>
        <authorList>
            <person name="Burkard T.R."/>
            <person name="Planyavsky M."/>
            <person name="Kaupe I."/>
            <person name="Breitwieser F.P."/>
            <person name="Buerckstuemmer T."/>
            <person name="Bennett K.L."/>
            <person name="Superti-Furga G."/>
            <person name="Colinge J."/>
        </authorList>
    </citation>
    <scope>IDENTIFICATION BY MASS SPECTROMETRY [LARGE SCALE ANALYSIS]</scope>
</reference>
<reference key="9">
    <citation type="submission" date="2005-11" db="PDB data bank">
        <title>Solution structure of the S4 domain of U3 small nucleolar ribonucleoprotein protein IMP3 homolog.</title>
        <authorList>
            <consortium name="RIKEN structural genomics initiative (RSGI)"/>
        </authorList>
    </citation>
    <scope>STRUCTURE BY NMR OF 109-166</scope>
</reference>
<reference evidence="6 7 8" key="10">
    <citation type="journal article" date="2021" name="Science">
        <title>Nucleolar maturation of the human small subunit processome.</title>
        <authorList>
            <person name="Singh S."/>
            <person name="Vanden Broeck A."/>
            <person name="Miller L."/>
            <person name="Chaker-Margot M."/>
            <person name="Klinge S."/>
        </authorList>
    </citation>
    <scope>STRUCTURE BY ELECTRON MICROSCOPY (2.70 ANGSTROMS)</scope>
    <scope>FUNCTION</scope>
    <scope>SUBUNIT</scope>
    <scope>SUBCELLULAR LOCATION</scope>
</reference>
<proteinExistence type="evidence at protein level"/>
<feature type="chain" id="PRO_0000132709" description="U3 small nucleolar ribonucleoprotein protein IMP3">
    <location>
        <begin position="1"/>
        <end position="184"/>
    </location>
</feature>
<feature type="domain" description="S4 RNA-binding" evidence="1">
    <location>
        <begin position="109"/>
        <end position="175"/>
    </location>
</feature>
<feature type="sequence conflict" description="In Ref. 4; BAD96841." evidence="4" ref="4">
    <original>Q</original>
    <variation>R</variation>
    <location>
        <position position="15"/>
    </location>
</feature>
<feature type="helix" evidence="9">
    <location>
        <begin position="111"/>
        <end position="117"/>
    </location>
</feature>
<feature type="strand" evidence="9">
    <location>
        <begin position="121"/>
        <end position="123"/>
    </location>
</feature>
<feature type="helix" evidence="9">
    <location>
        <begin position="124"/>
        <end position="132"/>
    </location>
</feature>
<feature type="strand" evidence="9">
    <location>
        <begin position="136"/>
        <end position="138"/>
    </location>
</feature>
<feature type="strand" evidence="9">
    <location>
        <begin position="149"/>
        <end position="151"/>
    </location>
</feature>
<feature type="helix" evidence="9">
    <location>
        <begin position="152"/>
        <end position="155"/>
    </location>
</feature>
<feature type="strand" evidence="9">
    <location>
        <begin position="158"/>
        <end position="161"/>
    </location>
</feature>
<feature type="strand" evidence="9">
    <location>
        <begin position="164"/>
        <end position="166"/>
    </location>
</feature>
<accession>Q9NV31</accession>
<accession>B3KQ67</accession>
<accession>Q53G10</accession>
<comment type="function">
    <text evidence="2 3">Component of the 60-80S U3 small nucleolar ribonucleoprotein (U3 snoRNP). Required for the early cleavages during pre-18S ribosomal RNA processing (PubMed:12655004). Part of the small subunit (SSU) processome, first precursor of the small eukaryotic ribosomal subunit. During the assembly of the SSU processome in the nucleolus, many ribosome biogenesis factors, an RNA chaperone and ribosomal proteins associate with the nascent pre-rRNA and work in concert to generate RNA folding, modifications, rearrangements and cleavage as well as targeted degradation of pre-ribosomal RNA by the RNA exosome (PubMed:34516797).</text>
</comment>
<comment type="subunit">
    <text evidence="2 3">Part of the small subunit (SSU) processome, composed of more than 70 proteins and the RNA chaperone small nucleolar RNA (snoRNA) U3 (PubMed:34516797). Component of a heterotrimeric complex containing IMP3, IMP4 and MPHOSPH10. Interacts with MPHOSPH10 (PubMed:12655004).</text>
</comment>
<comment type="interaction">
    <interactant intactId="EBI-747481">
        <id>Q9NV31</id>
    </interactant>
    <interactant intactId="EBI-748961">
        <id>O95273</id>
        <label>CCNDBP1</label>
    </interactant>
    <organismsDiffer>false</organismsDiffer>
    <experiments>6</experiments>
</comment>
<comment type="interaction">
    <interactant intactId="EBI-747481">
        <id>Q9NV31</id>
    </interactant>
    <interactant intactId="EBI-743105">
        <id>Q5JVL4</id>
        <label>EFHC1</label>
    </interactant>
    <organismsDiffer>false</organismsDiffer>
    <experiments>3</experiments>
</comment>
<comment type="interaction">
    <interactant intactId="EBI-747481">
        <id>Q9NV31</id>
    </interactant>
    <interactant intactId="EBI-852291">
        <id>O60447</id>
        <label>EVI5</label>
    </interactant>
    <organismsDiffer>false</organismsDiffer>
    <experiments>3</experiments>
</comment>
<comment type="interaction">
    <interactant intactId="EBI-747481">
        <id>Q9NV31</id>
    </interactant>
    <interactant intactId="EBI-1643885">
        <id>Q6P597</id>
        <label>KLC3</label>
    </interactant>
    <organismsDiffer>false</organismsDiffer>
    <experiments>3</experiments>
</comment>
<comment type="interaction">
    <interactant intactId="EBI-747481">
        <id>Q9NV31</id>
    </interactant>
    <interactant intactId="EBI-307531">
        <id>P23508</id>
        <label>MCC</label>
    </interactant>
    <organismsDiffer>false</organismsDiffer>
    <experiments>5</experiments>
</comment>
<comment type="interaction">
    <interactant intactId="EBI-747481">
        <id>Q9NV31</id>
    </interactant>
    <interactant intactId="EBI-5235884">
        <id>O00566</id>
        <label>MPHOSPH10</label>
    </interactant>
    <organismsDiffer>false</organismsDiffer>
    <experiments>5</experiments>
</comment>
<comment type="interaction">
    <interactant intactId="EBI-747481">
        <id>Q9NV31</id>
    </interactant>
    <interactant intactId="EBI-18012223">
        <id>P60323-2</id>
        <label>NANOS3</label>
    </interactant>
    <organismsDiffer>false</organismsDiffer>
    <experiments>3</experiments>
</comment>
<comment type="interaction">
    <interactant intactId="EBI-747481">
        <id>Q9NV31</id>
    </interactant>
    <interactant intactId="EBI-721802">
        <id>Q9BZL4</id>
        <label>PPP1R12C</label>
    </interactant>
    <organismsDiffer>false</organismsDiffer>
    <experiments>3</experiments>
</comment>
<comment type="interaction">
    <interactant intactId="EBI-747481">
        <id>Q9NV31</id>
    </interactant>
    <interactant intactId="EBI-748621">
        <id>Q9UJW9</id>
        <label>SERTAD3</label>
    </interactant>
    <organismsDiffer>false</organismsDiffer>
    <experiments>3</experiments>
</comment>
<comment type="interaction">
    <interactant intactId="EBI-747481">
        <id>Q9NV31</id>
    </interactant>
    <interactant intactId="EBI-741237">
        <id>O60504</id>
        <label>SORBS3</label>
    </interactant>
    <organismsDiffer>false</organismsDiffer>
    <experiments>3</experiments>
</comment>
<comment type="interaction">
    <interactant intactId="EBI-747481">
        <id>Q9NV31</id>
    </interactant>
    <interactant intactId="EBI-1105213">
        <id>Q9UBB9</id>
        <label>TFIP11</label>
    </interactant>
    <organismsDiffer>false</organismsDiffer>
    <experiments>4</experiments>
</comment>
<comment type="interaction">
    <interactant intactId="EBI-747481">
        <id>Q9NV31</id>
    </interactant>
    <interactant intactId="EBI-739895">
        <id>Q8N6Y0</id>
        <label>USHBP1</label>
    </interactant>
    <organismsDiffer>false</organismsDiffer>
    <experiments>6</experiments>
</comment>
<comment type="interaction">
    <interactant intactId="EBI-747481">
        <id>Q9NV31</id>
    </interactant>
    <interactant intactId="EBI-625509">
        <id>Q8N720</id>
        <label>ZNF655</label>
    </interactant>
    <organismsDiffer>false</organismsDiffer>
    <experiments>3</experiments>
</comment>
<comment type="interaction">
    <interactant intactId="EBI-747481">
        <id>Q9NV31</id>
    </interactant>
    <interactant intactId="EBI-444225">
        <id>Q15942</id>
        <label>ZYX</label>
    </interactant>
    <organismsDiffer>false</organismsDiffer>
    <experiments>8</experiments>
</comment>
<comment type="subcellular location">
    <subcellularLocation>
        <location evidence="2 3">Nucleus</location>
        <location evidence="2 3">Nucleolus</location>
    </subcellularLocation>
</comment>
<comment type="similarity">
    <text evidence="4">Belongs to the universal ribosomal protein uS4 family.</text>
</comment>
<name>IMP3_HUMAN</name>
<evidence type="ECO:0000255" key="1">
    <source>
        <dbReference type="PROSITE-ProRule" id="PRU00182"/>
    </source>
</evidence>
<evidence type="ECO:0000269" key="2">
    <source>
    </source>
</evidence>
<evidence type="ECO:0000269" key="3">
    <source>
    </source>
</evidence>
<evidence type="ECO:0000305" key="4"/>
<evidence type="ECO:0000312" key="5">
    <source>
        <dbReference type="HGNC" id="HGNC:14497"/>
    </source>
</evidence>
<evidence type="ECO:0007744" key="6">
    <source>
        <dbReference type="PDB" id="7MQ8"/>
    </source>
</evidence>
<evidence type="ECO:0007744" key="7">
    <source>
        <dbReference type="PDB" id="7MQ9"/>
    </source>
</evidence>
<evidence type="ECO:0007744" key="8">
    <source>
        <dbReference type="PDB" id="7MQA"/>
    </source>
</evidence>
<evidence type="ECO:0007829" key="9">
    <source>
        <dbReference type="PDB" id="2CQJ"/>
    </source>
</evidence>
<keyword id="KW-0002">3D-structure</keyword>
<keyword id="KW-0539">Nucleus</keyword>
<keyword id="KW-1267">Proteomics identification</keyword>
<keyword id="KW-1185">Reference proteome</keyword>
<keyword id="KW-0687">Ribonucleoprotein</keyword>
<keyword id="KW-0690">Ribosome biogenesis</keyword>
<keyword id="KW-0694">RNA-binding</keyword>
<keyword id="KW-0698">rRNA processing</keyword>
<keyword id="KW-0699">rRNA-binding</keyword>
<dbReference type="EMBL" id="AY050497">
    <property type="protein sequence ID" value="AAL06639.1"/>
    <property type="molecule type" value="mRNA"/>
</dbReference>
<dbReference type="EMBL" id="AL136913">
    <property type="protein sequence ID" value="CAB66847.1"/>
    <property type="molecule type" value="mRNA"/>
</dbReference>
<dbReference type="EMBL" id="AK001830">
    <property type="protein sequence ID" value="BAA91929.1"/>
    <property type="molecule type" value="mRNA"/>
</dbReference>
<dbReference type="EMBL" id="AK057531">
    <property type="protein sequence ID" value="BAG51929.1"/>
    <property type="molecule type" value="mRNA"/>
</dbReference>
<dbReference type="EMBL" id="AK223121">
    <property type="protein sequence ID" value="BAD96841.1"/>
    <property type="molecule type" value="mRNA"/>
</dbReference>
<dbReference type="EMBL" id="CH471136">
    <property type="protein sequence ID" value="EAW99244.1"/>
    <property type="molecule type" value="Genomic_DNA"/>
</dbReference>
<dbReference type="EMBL" id="BC006487">
    <property type="protein sequence ID" value="AAH06487.1"/>
    <property type="molecule type" value="mRNA"/>
</dbReference>
<dbReference type="EMBL" id="BC011745">
    <property type="protein sequence ID" value="AAH11745.1"/>
    <property type="molecule type" value="mRNA"/>
</dbReference>
<dbReference type="CCDS" id="CCDS10282.1"/>
<dbReference type="RefSeq" id="NP_060755.1">
    <property type="nucleotide sequence ID" value="NM_018285.4"/>
</dbReference>
<dbReference type="PDB" id="2CQJ">
    <property type="method" value="NMR"/>
    <property type="chains" value="A=109-166"/>
</dbReference>
<dbReference type="PDB" id="7MQ8">
    <property type="method" value="EM"/>
    <property type="resolution" value="3.60 A"/>
    <property type="chains" value="LZ=1-184"/>
</dbReference>
<dbReference type="PDB" id="7MQ9">
    <property type="method" value="EM"/>
    <property type="resolution" value="3.87 A"/>
    <property type="chains" value="LZ=1-184"/>
</dbReference>
<dbReference type="PDB" id="7MQA">
    <property type="method" value="EM"/>
    <property type="resolution" value="2.70 A"/>
    <property type="chains" value="LZ=1-184"/>
</dbReference>
<dbReference type="PDBsum" id="2CQJ"/>
<dbReference type="PDBsum" id="7MQ8"/>
<dbReference type="PDBsum" id="7MQ9"/>
<dbReference type="PDBsum" id="7MQA"/>
<dbReference type="EMDB" id="EMD-23936"/>
<dbReference type="EMDB" id="EMD-23937"/>
<dbReference type="EMDB" id="EMD-23938"/>
<dbReference type="SMR" id="Q9NV31"/>
<dbReference type="BioGRID" id="120560">
    <property type="interactions" value="143"/>
</dbReference>
<dbReference type="ComplexPortal" id="CPX-2478">
    <property type="entry name" value="MPP10 complex"/>
</dbReference>
<dbReference type="CORUM" id="Q9NV31"/>
<dbReference type="FunCoup" id="Q9NV31">
    <property type="interactions" value="916"/>
</dbReference>
<dbReference type="IntAct" id="Q9NV31">
    <property type="interactions" value="80"/>
</dbReference>
<dbReference type="MINT" id="Q9NV31"/>
<dbReference type="STRING" id="9606.ENSP00000326981"/>
<dbReference type="iPTMnet" id="Q9NV31"/>
<dbReference type="PhosphoSitePlus" id="Q9NV31"/>
<dbReference type="SwissPalm" id="Q9NV31"/>
<dbReference type="BioMuta" id="IMP3"/>
<dbReference type="DMDM" id="52783099"/>
<dbReference type="jPOST" id="Q9NV31"/>
<dbReference type="MassIVE" id="Q9NV31"/>
<dbReference type="PaxDb" id="9606-ENSP00000326981"/>
<dbReference type="PeptideAtlas" id="Q9NV31"/>
<dbReference type="ProteomicsDB" id="82742"/>
<dbReference type="Pumba" id="Q9NV31"/>
<dbReference type="Antibodypedia" id="43256">
    <property type="antibodies" value="239 antibodies from 29 providers"/>
</dbReference>
<dbReference type="DNASU" id="55272"/>
<dbReference type="Ensembl" id="ENST00000314852.2">
    <property type="protein sequence ID" value="ENSP00000326981.2"/>
    <property type="gene ID" value="ENSG00000177971.9"/>
</dbReference>
<dbReference type="Ensembl" id="ENST00000403490.3">
    <property type="protein sequence ID" value="ENSP00000385217.1"/>
    <property type="gene ID" value="ENSG00000177971.9"/>
</dbReference>
<dbReference type="GeneID" id="55272"/>
<dbReference type="KEGG" id="hsa:55272"/>
<dbReference type="MANE-Select" id="ENST00000403490.3">
    <property type="protein sequence ID" value="ENSP00000385217.1"/>
    <property type="RefSeq nucleotide sequence ID" value="NM_018285.4"/>
    <property type="RefSeq protein sequence ID" value="NP_060755.1"/>
</dbReference>
<dbReference type="UCSC" id="uc002bat.3">
    <property type="organism name" value="human"/>
</dbReference>
<dbReference type="AGR" id="HGNC:14497"/>
<dbReference type="CTD" id="55272"/>
<dbReference type="DisGeNET" id="55272"/>
<dbReference type="GeneCards" id="IMP3"/>
<dbReference type="HGNC" id="HGNC:14497">
    <property type="gene designation" value="IMP3"/>
</dbReference>
<dbReference type="HPA" id="ENSG00000177971">
    <property type="expression patterns" value="Low tissue specificity"/>
</dbReference>
<dbReference type="MIM" id="612980">
    <property type="type" value="gene"/>
</dbReference>
<dbReference type="neXtProt" id="NX_Q9NV31"/>
<dbReference type="OpenTargets" id="ENSG00000177971"/>
<dbReference type="PharmGKB" id="PA25517"/>
<dbReference type="VEuPathDB" id="HostDB:ENSG00000177971"/>
<dbReference type="eggNOG" id="KOG4655">
    <property type="taxonomic scope" value="Eukaryota"/>
</dbReference>
<dbReference type="GeneTree" id="ENSGT00550000075090"/>
<dbReference type="HOGENOM" id="CLU_097281_0_0_1"/>
<dbReference type="InParanoid" id="Q9NV31"/>
<dbReference type="OMA" id="FRIKHEQ"/>
<dbReference type="OrthoDB" id="10248812at2759"/>
<dbReference type="PAN-GO" id="Q9NV31">
    <property type="GO annotations" value="4 GO annotations based on evolutionary models"/>
</dbReference>
<dbReference type="PhylomeDB" id="Q9NV31"/>
<dbReference type="TreeFam" id="TF300149"/>
<dbReference type="PathwayCommons" id="Q9NV31"/>
<dbReference type="Reactome" id="R-HSA-6790901">
    <property type="pathway name" value="rRNA modification in the nucleus and cytosol"/>
</dbReference>
<dbReference type="Reactome" id="R-HSA-6791226">
    <property type="pathway name" value="Major pathway of rRNA processing in the nucleolus and cytosol"/>
</dbReference>
<dbReference type="SignaLink" id="Q9NV31"/>
<dbReference type="SIGNOR" id="Q9NV31"/>
<dbReference type="BioGRID-ORCS" id="55272">
    <property type="hits" value="823 hits in 1135 CRISPR screens"/>
</dbReference>
<dbReference type="CD-CODE" id="91857CE7">
    <property type="entry name" value="Nucleolus"/>
</dbReference>
<dbReference type="ChiTaRS" id="IMP3">
    <property type="organism name" value="human"/>
</dbReference>
<dbReference type="EvolutionaryTrace" id="Q9NV31"/>
<dbReference type="GeneWiki" id="IMP3"/>
<dbReference type="GenomeRNAi" id="55272"/>
<dbReference type="Pharos" id="Q9NV31">
    <property type="development level" value="Tbio"/>
</dbReference>
<dbReference type="PRO" id="PR:Q9NV31"/>
<dbReference type="Proteomes" id="UP000005640">
    <property type="component" value="Chromosome 15"/>
</dbReference>
<dbReference type="RNAct" id="Q9NV31">
    <property type="molecule type" value="protein"/>
</dbReference>
<dbReference type="Bgee" id="ENSG00000177971">
    <property type="expression patterns" value="Expressed in mucosa of transverse colon and 201 other cell types or tissues"/>
</dbReference>
<dbReference type="GO" id="GO:0005829">
    <property type="term" value="C:cytosol"/>
    <property type="evidence" value="ECO:0000314"/>
    <property type="project" value="HPA"/>
</dbReference>
<dbReference type="GO" id="GO:0034457">
    <property type="term" value="C:Mpp10 complex"/>
    <property type="evidence" value="ECO:0000314"/>
    <property type="project" value="MGI"/>
</dbReference>
<dbReference type="GO" id="GO:0005730">
    <property type="term" value="C:nucleolus"/>
    <property type="evidence" value="ECO:0000314"/>
    <property type="project" value="HGNC-UCL"/>
</dbReference>
<dbReference type="GO" id="GO:0005654">
    <property type="term" value="C:nucleoplasm"/>
    <property type="evidence" value="ECO:0000314"/>
    <property type="project" value="HPA"/>
</dbReference>
<dbReference type="GO" id="GO:0005634">
    <property type="term" value="C:nucleus"/>
    <property type="evidence" value="ECO:0000314"/>
    <property type="project" value="LIFEdb"/>
</dbReference>
<dbReference type="GO" id="GO:0030684">
    <property type="term" value="C:preribosome"/>
    <property type="evidence" value="ECO:0000314"/>
    <property type="project" value="MGI"/>
</dbReference>
<dbReference type="GO" id="GO:0032040">
    <property type="term" value="C:small-subunit processome"/>
    <property type="evidence" value="ECO:0000314"/>
    <property type="project" value="UniProtKB"/>
</dbReference>
<dbReference type="GO" id="GO:0003723">
    <property type="term" value="F:RNA binding"/>
    <property type="evidence" value="ECO:0007005"/>
    <property type="project" value="UniProtKB"/>
</dbReference>
<dbReference type="GO" id="GO:0019843">
    <property type="term" value="F:rRNA binding"/>
    <property type="evidence" value="ECO:0007669"/>
    <property type="project" value="UniProtKB-KW"/>
</dbReference>
<dbReference type="GO" id="GO:0030515">
    <property type="term" value="F:snoRNA binding"/>
    <property type="evidence" value="ECO:0000318"/>
    <property type="project" value="GO_Central"/>
</dbReference>
<dbReference type="GO" id="GO:0030490">
    <property type="term" value="P:maturation of SSU-rRNA"/>
    <property type="evidence" value="ECO:0000303"/>
    <property type="project" value="ComplexPortal"/>
</dbReference>
<dbReference type="GO" id="GO:0042274">
    <property type="term" value="P:ribosomal small subunit biogenesis"/>
    <property type="evidence" value="ECO:0000314"/>
    <property type="project" value="UniProtKB"/>
</dbReference>
<dbReference type="GO" id="GO:0006364">
    <property type="term" value="P:rRNA processing"/>
    <property type="evidence" value="ECO:0000318"/>
    <property type="project" value="GO_Central"/>
</dbReference>
<dbReference type="CDD" id="cd00165">
    <property type="entry name" value="S4"/>
    <property type="match status" value="1"/>
</dbReference>
<dbReference type="FunFam" id="3.10.290.10:FF:000006">
    <property type="entry name" value="U3 small nucleolar ribonucleoprotein IMP3"/>
    <property type="match status" value="1"/>
</dbReference>
<dbReference type="Gene3D" id="3.10.290.10">
    <property type="entry name" value="RNA-binding S4 domain"/>
    <property type="match status" value="1"/>
</dbReference>
<dbReference type="InterPro" id="IPR022801">
    <property type="entry name" value="Ribosomal_uS4"/>
</dbReference>
<dbReference type="InterPro" id="IPR001912">
    <property type="entry name" value="Ribosomal_uS4_N"/>
</dbReference>
<dbReference type="InterPro" id="IPR002942">
    <property type="entry name" value="S4_RNA-bd"/>
</dbReference>
<dbReference type="InterPro" id="IPR036986">
    <property type="entry name" value="S4_RNA-bd_sf"/>
</dbReference>
<dbReference type="PANTHER" id="PTHR11831">
    <property type="entry name" value="30S 40S RIBOSOMAL PROTEIN"/>
    <property type="match status" value="1"/>
</dbReference>
<dbReference type="PANTHER" id="PTHR11831:SF1">
    <property type="entry name" value="U3 SMALL NUCLEOLAR RIBONUCLEOPROTEIN PROTEIN IMP3"/>
    <property type="match status" value="1"/>
</dbReference>
<dbReference type="Pfam" id="PF00163">
    <property type="entry name" value="Ribosomal_S4"/>
    <property type="match status" value="1"/>
</dbReference>
<dbReference type="Pfam" id="PF01479">
    <property type="entry name" value="S4"/>
    <property type="match status" value="1"/>
</dbReference>
<dbReference type="SMART" id="SM01390">
    <property type="entry name" value="Ribosomal_S4"/>
    <property type="match status" value="1"/>
</dbReference>
<dbReference type="SMART" id="SM00363">
    <property type="entry name" value="S4"/>
    <property type="match status" value="1"/>
</dbReference>
<dbReference type="SUPFAM" id="SSF55174">
    <property type="entry name" value="Alpha-L RNA-binding motif"/>
    <property type="match status" value="1"/>
</dbReference>
<dbReference type="PROSITE" id="PS50889">
    <property type="entry name" value="S4"/>
    <property type="match status" value="1"/>
</dbReference>
<sequence length="184" mass="21850">MVRKLKFHEQKLLKQVDFLNWEVTDHNLHELRVLRRYRLQRREDYTRYNQLSRAVRELARRLRDLPERDQFRVRASAALLDKLYALGLVPTRGSLELCDFVTASSFCRRRLPTVLLKLRMAQHLQAAVAFVEQGHVRVGPDVVTDPAFLVTRSMEDFVTWVDSSKIKRHVLEYNEERDDFDLEA</sequence>
<protein>
    <recommendedName>
        <fullName>U3 small nucleolar ribonucleoprotein protein IMP3</fullName>
        <shortName>U3 snoRNP protein IMP3</shortName>
    </recommendedName>
    <alternativeName>
        <fullName>BRMS2</fullName>
    </alternativeName>
</protein>
<organism>
    <name type="scientific">Homo sapiens</name>
    <name type="common">Human</name>
    <dbReference type="NCBI Taxonomy" id="9606"/>
    <lineage>
        <taxon>Eukaryota</taxon>
        <taxon>Metazoa</taxon>
        <taxon>Chordata</taxon>
        <taxon>Craniata</taxon>
        <taxon>Vertebrata</taxon>
        <taxon>Euteleostomi</taxon>
        <taxon>Mammalia</taxon>
        <taxon>Eutheria</taxon>
        <taxon>Euarchontoglires</taxon>
        <taxon>Primates</taxon>
        <taxon>Haplorrhini</taxon>
        <taxon>Catarrhini</taxon>
        <taxon>Hominidae</taxon>
        <taxon>Homo</taxon>
    </lineage>
</organism>
<gene>
    <name evidence="5" type="primary">IMP3</name>
    <name type="synonym">C15orf12</name>
    <name type="synonym">MRPS4</name>
</gene>